<evidence type="ECO:0000250" key="1"/>
<evidence type="ECO:0000255" key="2"/>
<evidence type="ECO:0000255" key="3">
    <source>
        <dbReference type="PROSITE-ProRule" id="PRU10095"/>
    </source>
</evidence>
<evidence type="ECO:0000305" key="4"/>
<organism>
    <name type="scientific">Trichophyton verrucosum (strain HKI 0517)</name>
    <dbReference type="NCBI Taxonomy" id="663202"/>
    <lineage>
        <taxon>Eukaryota</taxon>
        <taxon>Fungi</taxon>
        <taxon>Dikarya</taxon>
        <taxon>Ascomycota</taxon>
        <taxon>Pezizomycotina</taxon>
        <taxon>Eurotiomycetes</taxon>
        <taxon>Eurotiomycetidae</taxon>
        <taxon>Onygenales</taxon>
        <taxon>Arthrodermataceae</taxon>
        <taxon>Trichophyton</taxon>
    </lineage>
</organism>
<name>MEP3_TRIVH</name>
<proteinExistence type="inferred from homology"/>
<feature type="signal peptide" evidence="2">
    <location>
        <begin position="1"/>
        <end position="18"/>
    </location>
</feature>
<feature type="propeptide" id="PRO_0000397732" evidence="1">
    <location>
        <begin position="19"/>
        <end position="246"/>
    </location>
</feature>
<feature type="chain" id="PRO_0000397733" description="Probable extracellular metalloproteinase 3">
    <location>
        <begin position="247"/>
        <end position="633"/>
    </location>
</feature>
<feature type="active site" evidence="3">
    <location>
        <position position="430"/>
    </location>
</feature>
<feature type="binding site" evidence="3">
    <location>
        <position position="429"/>
    </location>
    <ligand>
        <name>Zn(2+)</name>
        <dbReference type="ChEBI" id="CHEBI:29105"/>
        <note>catalytic</note>
    </ligand>
</feature>
<feature type="binding site" evidence="3">
    <location>
        <position position="433"/>
    </location>
    <ligand>
        <name>Zn(2+)</name>
        <dbReference type="ChEBI" id="CHEBI:29105"/>
        <note>catalytic</note>
    </ligand>
</feature>
<feature type="glycosylation site" description="N-linked (GlcNAc...) asparagine" evidence="2">
    <location>
        <position position="410"/>
    </location>
</feature>
<feature type="glycosylation site" description="N-linked (GlcNAc...) asparagine" evidence="2">
    <location>
        <position position="480"/>
    </location>
</feature>
<feature type="glycosylation site" description="N-linked (GlcNAc...) asparagine" evidence="2">
    <location>
        <position position="622"/>
    </location>
</feature>
<protein>
    <recommendedName>
        <fullName>Probable extracellular metalloproteinase 3</fullName>
        <ecNumber>3.4.24.-</ecNumber>
    </recommendedName>
    <alternativeName>
        <fullName>Fungalysin MEP3</fullName>
    </alternativeName>
</protein>
<sequence>MHGLLLAGLLALPMNVLAHPAEQHASNVLSRRGVDIESFRLPLKAKYMDSDATAQKIQAMSFSKDDDYVSTATKLVKSTFPKSTFRVVDDHYIGTNGIGHVHFKQTAHGLDIDNSDFNVNIGRDGKVFSFGNSFFTGEIPKENPMVKRAFSDPVKALKGAVKALNLPVKSDNAKAKTAAGKEAFEFMGTTGALSAPKANLVYLQKEDGSLALTWKVETDVGDNWLLTYVDAHNSETVHNVVDYVASAEYKVFAWGLNDPTEGNPTSIRDPWTDASPYTWNSDGMTKYPTTRGNNAIAQDNPTGGSTYINNYRPQSPNLIFSYPWSPTATPPSSYKDFSITQLFYTTNRYHDLLYSFGFNEAAGNFQVNNGNKGGRGNDFAIVNAQDGSGTNNANFATPPDGSPGRMRMYNWTTARPNRDGCLEAGIVIHEYTHGLSNRLCGGPANSACLNALESGGMGEGWGDFYATAIRLKPRDTKDTNYSMGAWAANNPKGIRAYLYSTNLQTNPYMYTSVNSLREVHQIGTVWASMLYDLMWALIEAHGGTYSADPVFRNGVPQDGRHLSMKLVMDGMALQPCNPNFVQARDAILDADRALTNSANKCTIWKAFAKRGLGYGAKYDARNRTGSNKLPPGC</sequence>
<dbReference type="EC" id="3.4.24.-"/>
<dbReference type="EMBL" id="ACYE01000382">
    <property type="protein sequence ID" value="EFE38642.1"/>
    <property type="molecule type" value="Genomic_DNA"/>
</dbReference>
<dbReference type="RefSeq" id="XP_003019287.1">
    <property type="nucleotide sequence ID" value="XM_003019241.1"/>
</dbReference>
<dbReference type="SMR" id="D4DHN5"/>
<dbReference type="MEROPS" id="M36.001"/>
<dbReference type="GlyCosmos" id="D4DHN5">
    <property type="glycosylation" value="3 sites, No reported glycans"/>
</dbReference>
<dbReference type="GeneID" id="9577609"/>
<dbReference type="KEGG" id="tve:TRV_06691"/>
<dbReference type="HOGENOM" id="CLU_012703_3_0_1"/>
<dbReference type="OrthoDB" id="1153at34384"/>
<dbReference type="Proteomes" id="UP000008383">
    <property type="component" value="Unassembled WGS sequence"/>
</dbReference>
<dbReference type="GO" id="GO:0005576">
    <property type="term" value="C:extracellular region"/>
    <property type="evidence" value="ECO:0007669"/>
    <property type="project" value="UniProtKB-SubCell"/>
</dbReference>
<dbReference type="GO" id="GO:0004222">
    <property type="term" value="F:metalloendopeptidase activity"/>
    <property type="evidence" value="ECO:0007669"/>
    <property type="project" value="InterPro"/>
</dbReference>
<dbReference type="GO" id="GO:0008270">
    <property type="term" value="F:zinc ion binding"/>
    <property type="evidence" value="ECO:0007669"/>
    <property type="project" value="InterPro"/>
</dbReference>
<dbReference type="GO" id="GO:0006508">
    <property type="term" value="P:proteolysis"/>
    <property type="evidence" value="ECO:0007669"/>
    <property type="project" value="UniProtKB-KW"/>
</dbReference>
<dbReference type="CDD" id="cd09596">
    <property type="entry name" value="M36"/>
    <property type="match status" value="1"/>
</dbReference>
<dbReference type="Gene3D" id="3.10.170.10">
    <property type="match status" value="1"/>
</dbReference>
<dbReference type="Gene3D" id="1.10.390.10">
    <property type="entry name" value="Neutral Protease Domain 2"/>
    <property type="match status" value="1"/>
</dbReference>
<dbReference type="InterPro" id="IPR011096">
    <property type="entry name" value="FTP_domain"/>
</dbReference>
<dbReference type="InterPro" id="IPR050371">
    <property type="entry name" value="Fungal_virulence_M36"/>
</dbReference>
<dbReference type="InterPro" id="IPR001842">
    <property type="entry name" value="Peptidase_M36"/>
</dbReference>
<dbReference type="InterPro" id="IPR027268">
    <property type="entry name" value="Peptidase_M4/M1_CTD_sf"/>
</dbReference>
<dbReference type="PANTHER" id="PTHR33478">
    <property type="entry name" value="EXTRACELLULAR METALLOPROTEINASE MEP"/>
    <property type="match status" value="1"/>
</dbReference>
<dbReference type="PANTHER" id="PTHR33478:SF1">
    <property type="entry name" value="EXTRACELLULAR METALLOPROTEINASE MEP"/>
    <property type="match status" value="1"/>
</dbReference>
<dbReference type="Pfam" id="PF07504">
    <property type="entry name" value="FTP"/>
    <property type="match status" value="1"/>
</dbReference>
<dbReference type="Pfam" id="PF02128">
    <property type="entry name" value="Peptidase_M36"/>
    <property type="match status" value="1"/>
</dbReference>
<dbReference type="PRINTS" id="PR00999">
    <property type="entry name" value="FUNGALYSIN"/>
</dbReference>
<dbReference type="SUPFAM" id="SSF55486">
    <property type="entry name" value="Metalloproteases ('zincins'), catalytic domain"/>
    <property type="match status" value="1"/>
</dbReference>
<dbReference type="PROSITE" id="PS00142">
    <property type="entry name" value="ZINC_PROTEASE"/>
    <property type="match status" value="1"/>
</dbReference>
<keyword id="KW-0325">Glycoprotein</keyword>
<keyword id="KW-0378">Hydrolase</keyword>
<keyword id="KW-0479">Metal-binding</keyword>
<keyword id="KW-0482">Metalloprotease</keyword>
<keyword id="KW-0645">Protease</keyword>
<keyword id="KW-0964">Secreted</keyword>
<keyword id="KW-0732">Signal</keyword>
<keyword id="KW-0843">Virulence</keyword>
<keyword id="KW-0862">Zinc</keyword>
<keyword id="KW-0865">Zymogen</keyword>
<comment type="function">
    <text evidence="1">Secreted metalloproteinase probably acting as a virulence factor.</text>
</comment>
<comment type="cofactor">
    <cofactor evidence="1">
        <name>Zn(2+)</name>
        <dbReference type="ChEBI" id="CHEBI:29105"/>
    </cofactor>
    <text evidence="1">Binds 1 zinc ion per subunit.</text>
</comment>
<comment type="subcellular location">
    <subcellularLocation>
        <location evidence="1">Secreted</location>
    </subcellularLocation>
</comment>
<comment type="similarity">
    <text evidence="4">Belongs to the peptidase M36 family.</text>
</comment>
<accession>D4DHN5</accession>
<reference key="1">
    <citation type="journal article" date="2011" name="Genome Biol.">
        <title>Comparative and functional genomics provide insights into the pathogenicity of dermatophytic fungi.</title>
        <authorList>
            <person name="Burmester A."/>
            <person name="Shelest E."/>
            <person name="Gloeckner G."/>
            <person name="Heddergott C."/>
            <person name="Schindler S."/>
            <person name="Staib P."/>
            <person name="Heidel A."/>
            <person name="Felder M."/>
            <person name="Petzold A."/>
            <person name="Szafranski K."/>
            <person name="Feuermann M."/>
            <person name="Pedruzzi I."/>
            <person name="Priebe S."/>
            <person name="Groth M."/>
            <person name="Winkler R."/>
            <person name="Li W."/>
            <person name="Kniemeyer O."/>
            <person name="Schroeckh V."/>
            <person name="Hertweck C."/>
            <person name="Hube B."/>
            <person name="White T.C."/>
            <person name="Platzer M."/>
            <person name="Guthke R."/>
            <person name="Heitman J."/>
            <person name="Woestemeyer J."/>
            <person name="Zipfel P.F."/>
            <person name="Monod M."/>
            <person name="Brakhage A.A."/>
        </authorList>
    </citation>
    <scope>NUCLEOTIDE SEQUENCE [LARGE SCALE GENOMIC DNA]</scope>
    <source>
        <strain>HKI 0517</strain>
    </source>
</reference>
<gene>
    <name type="primary">MEP3</name>
    <name type="ORF">TRV_06691</name>
</gene>